<protein>
    <recommendedName>
        <fullName evidence="1">DNA-directed RNA polymerase subunit beta'</fullName>
        <shortName evidence="1">RNAP subunit beta'</shortName>
        <ecNumber evidence="1">2.7.7.6</ecNumber>
    </recommendedName>
    <alternativeName>
        <fullName evidence="1">RNA polymerase subunit beta'</fullName>
    </alternativeName>
    <alternativeName>
        <fullName evidence="1">Transcriptase subunit beta'</fullName>
    </alternativeName>
</protein>
<sequence length="1201" mass="134755">MLDVNNFEYMKIGLASPDKIRSWSHGEVKKPETINYRTLKPERDGLFCERIFGPMKDWECSCGKYKRVRYKGVVCDRCGVEVTKSKVRRERMGHIELAAPVSHIWYFKGIPSRMGLVMDMSPRALEEIIYFASYVVTEPGDTPLEKKQLLSEREYRVYREKYGKGFSAGMGAEAIKKILADIDLEKETNDLKEELKSAQGQRRTRAIRRLEVMEAFRNSGNNPSWMVLDVLPVIPPEIRPMVQLEGGRFATSDLNDLYRRVINRNNRLKRLLDLGAPNIIVQNEKRMLQEAVDALIDNGRRGRPVTGPGNRPLKSLSHMLKGKQGRFRQNLLGKRVDYSGRSVIVVGPNLKMYQCGLPKEMALELFKPFVMKELVGRGLAHNIKSAKRKIERMAPEIWDVLEEVIREHPVLLNRAPTLHRLGIQAFEPTLVEGRAIRLHPLVCTAYNADFDGDQMAVHVPLSAEAQAEARILMLAAQNILNPKDGKPVVTPSQDMVLGNYYLTLERENAVGEGTIFKDINEAQLAYQNGYVHLHSRIAVFAGSIPNERFTDEQRKQLLITTVGKLIFNTILPKSFPYINEPTKFNLEIETPAKYFVDTTTDVRAHIAAQELIDPFKKKILGNIIAEVFKKFHITETSKMLDRMKDLGFKISTKAGMTVGIADILTLEEKHEILEKAHDTVEKITKSFRRGLITDDERYERVIGVWNAAKDEIQGKLILSLDRLNPIFMMQDSGARGNISNFTQLAGMRGLMADPSGRIVELPITSNFREGLTVLEYFISTHGARKGLTDTALKTADSGYLTRRLVDVAQDVIIREDDCGTDRGLTIKAIREGTEIIEPLEERLEGRYSRKTIRHPETKEVIARENDLITEAIATQIVDAGIEEVTIRSAFTCNTKHGVCKKCYGKNLATGTEVEVGEAVGIIAAQSIGEPGTQLTMRTFHTGGVAGDDITQGLPRIQEIFEARNPKGQAIITEVGGEVVSIEEGRDRQQEITIQGTDDRRSYNIPYTARLRVEEGSIVERGEALTEGSVDPKALIRVRDVLSVQEYLLAEVQKVYRMQGVEIGDKHVEVMVRQMLRKIRVMDTGDTNILPGTLMDIHTFTEANRDAILSGSQPATGRPVLLGITKASLETDSFLSAASFQETTRVLTDAAIKGKRDELLGLKENVILGKLVPAGTGIGRYRKLKSEVIKETAEVTDEITNI</sequence>
<gene>
    <name evidence="1" type="primary">rpoC</name>
    <name type="ordered locus">lin0286</name>
</gene>
<accession>P77879</accession>
<name>RPOC_LISIN</name>
<comment type="function">
    <text evidence="1">DNA-dependent RNA polymerase catalyzes the transcription of DNA into RNA using the four ribonucleoside triphosphates as substrates.</text>
</comment>
<comment type="catalytic activity">
    <reaction evidence="1">
        <text>RNA(n) + a ribonucleoside 5'-triphosphate = RNA(n+1) + diphosphate</text>
        <dbReference type="Rhea" id="RHEA:21248"/>
        <dbReference type="Rhea" id="RHEA-COMP:14527"/>
        <dbReference type="Rhea" id="RHEA-COMP:17342"/>
        <dbReference type="ChEBI" id="CHEBI:33019"/>
        <dbReference type="ChEBI" id="CHEBI:61557"/>
        <dbReference type="ChEBI" id="CHEBI:140395"/>
        <dbReference type="EC" id="2.7.7.6"/>
    </reaction>
</comment>
<comment type="cofactor">
    <cofactor evidence="1">
        <name>Mg(2+)</name>
        <dbReference type="ChEBI" id="CHEBI:18420"/>
    </cofactor>
    <text evidence="1">Binds 1 Mg(2+) ion per subunit.</text>
</comment>
<comment type="cofactor">
    <cofactor evidence="1">
        <name>Zn(2+)</name>
        <dbReference type="ChEBI" id="CHEBI:29105"/>
    </cofactor>
    <text evidence="1">Binds 2 Zn(2+) ions per subunit.</text>
</comment>
<comment type="subunit">
    <text evidence="1">The RNAP catalytic core consists of 2 alpha, 1 beta, 1 beta' and 1 omega subunit. When a sigma factor is associated with the core the holoenzyme is formed, which can initiate transcription.</text>
</comment>
<comment type="similarity">
    <text evidence="1">Belongs to the RNA polymerase beta' chain family.</text>
</comment>
<organism>
    <name type="scientific">Listeria innocua serovar 6a (strain ATCC BAA-680 / CLIP 11262)</name>
    <dbReference type="NCBI Taxonomy" id="272626"/>
    <lineage>
        <taxon>Bacteria</taxon>
        <taxon>Bacillati</taxon>
        <taxon>Bacillota</taxon>
        <taxon>Bacilli</taxon>
        <taxon>Bacillales</taxon>
        <taxon>Listeriaceae</taxon>
        <taxon>Listeria</taxon>
    </lineage>
</organism>
<evidence type="ECO:0000255" key="1">
    <source>
        <dbReference type="HAMAP-Rule" id="MF_01322"/>
    </source>
</evidence>
<evidence type="ECO:0000305" key="2"/>
<proteinExistence type="inferred from homology"/>
<dbReference type="EC" id="2.7.7.6" evidence="1"/>
<dbReference type="EMBL" id="AL596164">
    <property type="protein sequence ID" value="CAC95519.1"/>
    <property type="molecule type" value="Genomic_DNA"/>
</dbReference>
<dbReference type="EMBL" id="X89229">
    <property type="protein sequence ID" value="CAA61513.1"/>
    <property type="molecule type" value="Genomic_DNA"/>
</dbReference>
<dbReference type="PIR" id="AG1468">
    <property type="entry name" value="AG1468"/>
</dbReference>
<dbReference type="PIR" id="T09641">
    <property type="entry name" value="T09641"/>
</dbReference>
<dbReference type="RefSeq" id="WP_010990309.1">
    <property type="nucleotide sequence ID" value="NC_003212.1"/>
</dbReference>
<dbReference type="SMR" id="P77879"/>
<dbReference type="STRING" id="272626.gene:17564613"/>
<dbReference type="GeneID" id="93233736"/>
<dbReference type="KEGG" id="lin:rpoC"/>
<dbReference type="eggNOG" id="COG0086">
    <property type="taxonomic scope" value="Bacteria"/>
</dbReference>
<dbReference type="HOGENOM" id="CLU_000524_3_1_9"/>
<dbReference type="OrthoDB" id="9815296at2"/>
<dbReference type="Proteomes" id="UP000002513">
    <property type="component" value="Chromosome"/>
</dbReference>
<dbReference type="GO" id="GO:0000428">
    <property type="term" value="C:DNA-directed RNA polymerase complex"/>
    <property type="evidence" value="ECO:0007669"/>
    <property type="project" value="UniProtKB-KW"/>
</dbReference>
<dbReference type="GO" id="GO:0003677">
    <property type="term" value="F:DNA binding"/>
    <property type="evidence" value="ECO:0007669"/>
    <property type="project" value="UniProtKB-UniRule"/>
</dbReference>
<dbReference type="GO" id="GO:0003899">
    <property type="term" value="F:DNA-directed RNA polymerase activity"/>
    <property type="evidence" value="ECO:0007669"/>
    <property type="project" value="UniProtKB-UniRule"/>
</dbReference>
<dbReference type="GO" id="GO:0000287">
    <property type="term" value="F:magnesium ion binding"/>
    <property type="evidence" value="ECO:0007669"/>
    <property type="project" value="UniProtKB-UniRule"/>
</dbReference>
<dbReference type="GO" id="GO:0008270">
    <property type="term" value="F:zinc ion binding"/>
    <property type="evidence" value="ECO:0007669"/>
    <property type="project" value="UniProtKB-UniRule"/>
</dbReference>
<dbReference type="GO" id="GO:0006351">
    <property type="term" value="P:DNA-templated transcription"/>
    <property type="evidence" value="ECO:0007669"/>
    <property type="project" value="UniProtKB-UniRule"/>
</dbReference>
<dbReference type="CDD" id="cd02655">
    <property type="entry name" value="RNAP_beta'_C"/>
    <property type="match status" value="1"/>
</dbReference>
<dbReference type="CDD" id="cd01609">
    <property type="entry name" value="RNAP_beta'_N"/>
    <property type="match status" value="1"/>
</dbReference>
<dbReference type="FunFam" id="1.10.132.30:FF:000003">
    <property type="entry name" value="DNA-directed RNA polymerase subunit beta"/>
    <property type="match status" value="1"/>
</dbReference>
<dbReference type="FunFam" id="1.10.150.390:FF:000002">
    <property type="entry name" value="DNA-directed RNA polymerase subunit beta"/>
    <property type="match status" value="1"/>
</dbReference>
<dbReference type="FunFam" id="1.10.274.100:FF:000019">
    <property type="entry name" value="DNA-directed RNA polymerase subunit beta"/>
    <property type="match status" value="1"/>
</dbReference>
<dbReference type="FunFam" id="1.10.40.90:FF:000001">
    <property type="entry name" value="DNA-directed RNA polymerase subunit beta"/>
    <property type="match status" value="1"/>
</dbReference>
<dbReference type="FunFam" id="4.10.860.120:FF:000001">
    <property type="entry name" value="DNA-directed RNA polymerase subunit beta"/>
    <property type="match status" value="1"/>
</dbReference>
<dbReference type="Gene3D" id="1.10.132.30">
    <property type="match status" value="1"/>
</dbReference>
<dbReference type="Gene3D" id="1.10.150.390">
    <property type="match status" value="1"/>
</dbReference>
<dbReference type="Gene3D" id="1.10.1790.20">
    <property type="match status" value="1"/>
</dbReference>
<dbReference type="Gene3D" id="1.10.40.90">
    <property type="match status" value="1"/>
</dbReference>
<dbReference type="Gene3D" id="2.40.40.20">
    <property type="match status" value="1"/>
</dbReference>
<dbReference type="Gene3D" id="2.40.50.100">
    <property type="match status" value="1"/>
</dbReference>
<dbReference type="Gene3D" id="4.10.860.120">
    <property type="entry name" value="RNA polymerase II, clamp domain"/>
    <property type="match status" value="1"/>
</dbReference>
<dbReference type="Gene3D" id="1.10.274.100">
    <property type="entry name" value="RNA polymerase Rpb1, domain 3"/>
    <property type="match status" value="1"/>
</dbReference>
<dbReference type="HAMAP" id="MF_01322">
    <property type="entry name" value="RNApol_bact_RpoC"/>
    <property type="match status" value="1"/>
</dbReference>
<dbReference type="InterPro" id="IPR045867">
    <property type="entry name" value="DNA-dir_RpoC_beta_prime"/>
</dbReference>
<dbReference type="InterPro" id="IPR012754">
    <property type="entry name" value="DNA-dir_RpoC_beta_prime_bact"/>
</dbReference>
<dbReference type="InterPro" id="IPR000722">
    <property type="entry name" value="RNA_pol_asu"/>
</dbReference>
<dbReference type="InterPro" id="IPR006592">
    <property type="entry name" value="RNA_pol_N"/>
</dbReference>
<dbReference type="InterPro" id="IPR007080">
    <property type="entry name" value="RNA_pol_Rpb1_1"/>
</dbReference>
<dbReference type="InterPro" id="IPR007066">
    <property type="entry name" value="RNA_pol_Rpb1_3"/>
</dbReference>
<dbReference type="InterPro" id="IPR042102">
    <property type="entry name" value="RNA_pol_Rpb1_3_sf"/>
</dbReference>
<dbReference type="InterPro" id="IPR007083">
    <property type="entry name" value="RNA_pol_Rpb1_4"/>
</dbReference>
<dbReference type="InterPro" id="IPR007081">
    <property type="entry name" value="RNA_pol_Rpb1_5"/>
</dbReference>
<dbReference type="InterPro" id="IPR044893">
    <property type="entry name" value="RNA_pol_Rpb1_clamp_domain"/>
</dbReference>
<dbReference type="InterPro" id="IPR038120">
    <property type="entry name" value="Rpb1_funnel_sf"/>
</dbReference>
<dbReference type="NCBIfam" id="TIGR02386">
    <property type="entry name" value="rpoC_TIGR"/>
    <property type="match status" value="1"/>
</dbReference>
<dbReference type="PANTHER" id="PTHR19376">
    <property type="entry name" value="DNA-DIRECTED RNA POLYMERASE"/>
    <property type="match status" value="1"/>
</dbReference>
<dbReference type="PANTHER" id="PTHR19376:SF54">
    <property type="entry name" value="DNA-DIRECTED RNA POLYMERASE SUBUNIT BETA"/>
    <property type="match status" value="1"/>
</dbReference>
<dbReference type="Pfam" id="PF04997">
    <property type="entry name" value="RNA_pol_Rpb1_1"/>
    <property type="match status" value="1"/>
</dbReference>
<dbReference type="Pfam" id="PF00623">
    <property type="entry name" value="RNA_pol_Rpb1_2"/>
    <property type="match status" value="1"/>
</dbReference>
<dbReference type="Pfam" id="PF04983">
    <property type="entry name" value="RNA_pol_Rpb1_3"/>
    <property type="match status" value="1"/>
</dbReference>
<dbReference type="Pfam" id="PF05000">
    <property type="entry name" value="RNA_pol_Rpb1_4"/>
    <property type="match status" value="1"/>
</dbReference>
<dbReference type="Pfam" id="PF04998">
    <property type="entry name" value="RNA_pol_Rpb1_5"/>
    <property type="match status" value="1"/>
</dbReference>
<dbReference type="SMART" id="SM00663">
    <property type="entry name" value="RPOLA_N"/>
    <property type="match status" value="1"/>
</dbReference>
<dbReference type="SUPFAM" id="SSF64484">
    <property type="entry name" value="beta and beta-prime subunits of DNA dependent RNA-polymerase"/>
    <property type="match status" value="1"/>
</dbReference>
<keyword id="KW-0240">DNA-directed RNA polymerase</keyword>
<keyword id="KW-0460">Magnesium</keyword>
<keyword id="KW-0479">Metal-binding</keyword>
<keyword id="KW-0548">Nucleotidyltransferase</keyword>
<keyword id="KW-0804">Transcription</keyword>
<keyword id="KW-0808">Transferase</keyword>
<keyword id="KW-0862">Zinc</keyword>
<reference key="1">
    <citation type="journal article" date="2001" name="Science">
        <title>Comparative genomics of Listeria species.</title>
        <authorList>
            <person name="Glaser P."/>
            <person name="Frangeul L."/>
            <person name="Buchrieser C."/>
            <person name="Rusniok C."/>
            <person name="Amend A."/>
            <person name="Baquero F."/>
            <person name="Berche P."/>
            <person name="Bloecker H."/>
            <person name="Brandt P."/>
            <person name="Chakraborty T."/>
            <person name="Charbit A."/>
            <person name="Chetouani F."/>
            <person name="Couve E."/>
            <person name="de Daruvar A."/>
            <person name="Dehoux P."/>
            <person name="Domann E."/>
            <person name="Dominguez-Bernal G."/>
            <person name="Duchaud E."/>
            <person name="Durant L."/>
            <person name="Dussurget O."/>
            <person name="Entian K.-D."/>
            <person name="Fsihi H."/>
            <person name="Garcia-del Portillo F."/>
            <person name="Garrido P."/>
            <person name="Gautier L."/>
            <person name="Goebel W."/>
            <person name="Gomez-Lopez N."/>
            <person name="Hain T."/>
            <person name="Hauf J."/>
            <person name="Jackson D."/>
            <person name="Jones L.-M."/>
            <person name="Kaerst U."/>
            <person name="Kreft J."/>
            <person name="Kuhn M."/>
            <person name="Kunst F."/>
            <person name="Kurapkat G."/>
            <person name="Madueno E."/>
            <person name="Maitournam A."/>
            <person name="Mata Vicente J."/>
            <person name="Ng E."/>
            <person name="Nedjari H."/>
            <person name="Nordsiek G."/>
            <person name="Novella S."/>
            <person name="de Pablos B."/>
            <person name="Perez-Diaz J.-C."/>
            <person name="Purcell R."/>
            <person name="Remmel B."/>
            <person name="Rose M."/>
            <person name="Schlueter T."/>
            <person name="Simoes N."/>
            <person name="Tierrez A."/>
            <person name="Vazquez-Boland J.-A."/>
            <person name="Voss H."/>
            <person name="Wehland J."/>
            <person name="Cossart P."/>
        </authorList>
    </citation>
    <scope>NUCLEOTIDE SEQUENCE [LARGE SCALE GENOMIC DNA]</scope>
    <source>
        <strain>ATCC BAA-680 / CLIP 11262</strain>
    </source>
</reference>
<reference key="2">
    <citation type="submission" date="1996-08" db="EMBL/GenBank/DDBJ databases">
        <title>Cloning part of the rpoC gene encoding the B' subunit of the DNA-dependent RNA polymerase from some Gram-positive bacteria and comparative amino acid sequence.</title>
        <authorList>
            <person name="Morse R."/>
            <person name="Collins M.D."/>
            <person name="Balsdon J.T."/>
            <person name="Reading S."/>
            <person name="Richardson P.T."/>
        </authorList>
    </citation>
    <scope>NUCLEOTIDE SEQUENCE [GENOMIC DNA] OF 1-1053</scope>
    <source>
        <strain>ATCC 33090 / DSM 20649 / NCTC 11288 / Serovar 6a</strain>
    </source>
</reference>
<feature type="chain" id="PRO_0000067754" description="DNA-directed RNA polymerase subunit beta'">
    <location>
        <begin position="1"/>
        <end position="1201"/>
    </location>
</feature>
<feature type="binding site" evidence="1">
    <location>
        <position position="60"/>
    </location>
    <ligand>
        <name>Zn(2+)</name>
        <dbReference type="ChEBI" id="CHEBI:29105"/>
        <label>1</label>
    </ligand>
</feature>
<feature type="binding site" evidence="1">
    <location>
        <position position="62"/>
    </location>
    <ligand>
        <name>Zn(2+)</name>
        <dbReference type="ChEBI" id="CHEBI:29105"/>
        <label>1</label>
    </ligand>
</feature>
<feature type="binding site" evidence="1">
    <location>
        <position position="75"/>
    </location>
    <ligand>
        <name>Zn(2+)</name>
        <dbReference type="ChEBI" id="CHEBI:29105"/>
        <label>1</label>
    </ligand>
</feature>
<feature type="binding site" evidence="1">
    <location>
        <position position="78"/>
    </location>
    <ligand>
        <name>Zn(2+)</name>
        <dbReference type="ChEBI" id="CHEBI:29105"/>
        <label>1</label>
    </ligand>
</feature>
<feature type="binding site" evidence="1">
    <location>
        <position position="449"/>
    </location>
    <ligand>
        <name>Mg(2+)</name>
        <dbReference type="ChEBI" id="CHEBI:18420"/>
    </ligand>
</feature>
<feature type="binding site" evidence="1">
    <location>
        <position position="451"/>
    </location>
    <ligand>
        <name>Mg(2+)</name>
        <dbReference type="ChEBI" id="CHEBI:18420"/>
    </ligand>
</feature>
<feature type="binding site" evidence="1">
    <location>
        <position position="453"/>
    </location>
    <ligand>
        <name>Mg(2+)</name>
        <dbReference type="ChEBI" id="CHEBI:18420"/>
    </ligand>
</feature>
<feature type="binding site" evidence="1">
    <location>
        <position position="818"/>
    </location>
    <ligand>
        <name>Zn(2+)</name>
        <dbReference type="ChEBI" id="CHEBI:29105"/>
        <label>2</label>
    </ligand>
</feature>
<feature type="binding site" evidence="1">
    <location>
        <position position="892"/>
    </location>
    <ligand>
        <name>Zn(2+)</name>
        <dbReference type="ChEBI" id="CHEBI:29105"/>
        <label>2</label>
    </ligand>
</feature>
<feature type="binding site" evidence="1">
    <location>
        <position position="899"/>
    </location>
    <ligand>
        <name>Zn(2+)</name>
        <dbReference type="ChEBI" id="CHEBI:29105"/>
        <label>2</label>
    </ligand>
</feature>
<feature type="binding site" evidence="1">
    <location>
        <position position="902"/>
    </location>
    <ligand>
        <name>Zn(2+)</name>
        <dbReference type="ChEBI" id="CHEBI:29105"/>
        <label>2</label>
    </ligand>
</feature>
<feature type="sequence conflict" description="In Ref. 2; CAA61513." evidence="2" ref="2">
    <original>L</original>
    <variation>S</variation>
    <location>
        <position position="774"/>
    </location>
</feature>